<comment type="function">
    <text evidence="1">Catalyzes the methylthiolation of N6-(dimethylallyl)adenosine (i(6)A), leading to the formation of 2-methylthio-N6-(dimethylallyl)adenosine (ms(2)i(6)A) at position 37 in tRNAs that read codons beginning with uridine.</text>
</comment>
<comment type="catalytic activity">
    <reaction evidence="1">
        <text>N(6)-dimethylallyladenosine(37) in tRNA + (sulfur carrier)-SH + AH2 + 2 S-adenosyl-L-methionine = 2-methylsulfanyl-N(6)-dimethylallyladenosine(37) in tRNA + (sulfur carrier)-H + 5'-deoxyadenosine + L-methionine + A + S-adenosyl-L-homocysteine + 2 H(+)</text>
        <dbReference type="Rhea" id="RHEA:37067"/>
        <dbReference type="Rhea" id="RHEA-COMP:10375"/>
        <dbReference type="Rhea" id="RHEA-COMP:10376"/>
        <dbReference type="Rhea" id="RHEA-COMP:14737"/>
        <dbReference type="Rhea" id="RHEA-COMP:14739"/>
        <dbReference type="ChEBI" id="CHEBI:13193"/>
        <dbReference type="ChEBI" id="CHEBI:15378"/>
        <dbReference type="ChEBI" id="CHEBI:17319"/>
        <dbReference type="ChEBI" id="CHEBI:17499"/>
        <dbReference type="ChEBI" id="CHEBI:29917"/>
        <dbReference type="ChEBI" id="CHEBI:57844"/>
        <dbReference type="ChEBI" id="CHEBI:57856"/>
        <dbReference type="ChEBI" id="CHEBI:59789"/>
        <dbReference type="ChEBI" id="CHEBI:64428"/>
        <dbReference type="ChEBI" id="CHEBI:74415"/>
        <dbReference type="ChEBI" id="CHEBI:74417"/>
        <dbReference type="EC" id="2.8.4.3"/>
    </reaction>
</comment>
<comment type="cofactor">
    <cofactor evidence="1">
        <name>[4Fe-4S] cluster</name>
        <dbReference type="ChEBI" id="CHEBI:49883"/>
    </cofactor>
    <text evidence="1">Binds 2 [4Fe-4S] clusters. One cluster is coordinated with 3 cysteines and an exchangeable S-adenosyl-L-methionine.</text>
</comment>
<comment type="subunit">
    <text evidence="1">Monomer.</text>
</comment>
<comment type="subcellular location">
    <subcellularLocation>
        <location evidence="1">Cytoplasm</location>
    </subcellularLocation>
</comment>
<comment type="similarity">
    <text evidence="1">Belongs to the methylthiotransferase family. MiaB subfamily.</text>
</comment>
<name>MIAB_BACLD</name>
<keyword id="KW-0004">4Fe-4S</keyword>
<keyword id="KW-0963">Cytoplasm</keyword>
<keyword id="KW-0408">Iron</keyword>
<keyword id="KW-0411">Iron-sulfur</keyword>
<keyword id="KW-0479">Metal-binding</keyword>
<keyword id="KW-1185">Reference proteome</keyword>
<keyword id="KW-0949">S-adenosyl-L-methionine</keyword>
<keyword id="KW-0808">Transferase</keyword>
<keyword id="KW-0819">tRNA processing</keyword>
<organism>
    <name type="scientific">Bacillus licheniformis (strain ATCC 14580 / DSM 13 / JCM 2505 / CCUG 7422 / NBRC 12200 / NCIMB 9375 / NCTC 10341 / NRRL NRS-1264 / Gibson 46)</name>
    <dbReference type="NCBI Taxonomy" id="279010"/>
    <lineage>
        <taxon>Bacteria</taxon>
        <taxon>Bacillati</taxon>
        <taxon>Bacillota</taxon>
        <taxon>Bacilli</taxon>
        <taxon>Bacillales</taxon>
        <taxon>Bacillaceae</taxon>
        <taxon>Bacillus</taxon>
    </lineage>
</organism>
<accession>Q65JE5</accession>
<accession>Q62UU9</accession>
<sequence>MNEKQRIESGQVNPSDKKSEKDYSKYFEAVYVPPSLKDAKKRGKEEVKYHNDFKISEQFRGMGEGRKFYIRTYGCQMNEHDTEVMAGIFMALGYEPTDSTEDANVILLNTCAIRENAENKVFGEIGHLKALKKDNPDLILGVCGCMSQEESVVNRILKKHPFVDLIFGTHNIHRLPELLSEAYLSKEMVIEVWSKEGDVIENLPKVRTGKIKGWVNIMYGCDKFCTYCIVPYTRGKERSRRPEDIIQEVRRLAAEGYKEITLLGQNVNAYGKDFEDMEYGLGHLMDELRKIDIPRIRFTTSHPRDFDDHLIEVLAKGGNLLDHIHLPVQSGSSDVLKLMARKYDRERYLELVAKIKKAMPNASLTTDIIVGFPNETDEQFEETLSLYREVEFDSAYTFIYSPREGTPAAKMKDNVPMRVKKERLQRLNEVVNEISAKKMKEYEGQVVEVLVEGESKNNPDILAGYTRKNKLVNFKGPKEAIGQLVNVKIHQAKTWSLDGEMVGEAIEVK</sequence>
<proteinExistence type="inferred from homology"/>
<dbReference type="EC" id="2.8.4.3" evidence="1"/>
<dbReference type="EMBL" id="CP000002">
    <property type="protein sequence ID" value="AAU23460.1"/>
    <property type="molecule type" value="Genomic_DNA"/>
</dbReference>
<dbReference type="EMBL" id="AE017333">
    <property type="protein sequence ID" value="AAU40819.1"/>
    <property type="molecule type" value="Genomic_DNA"/>
</dbReference>
<dbReference type="RefSeq" id="WP_003181965.1">
    <property type="nucleotide sequence ID" value="NC_006322.1"/>
</dbReference>
<dbReference type="SMR" id="Q65JE5"/>
<dbReference type="STRING" id="279010.BL03660"/>
<dbReference type="GeneID" id="92861483"/>
<dbReference type="KEGG" id="bld:BLi01925"/>
<dbReference type="KEGG" id="bli:BL03660"/>
<dbReference type="eggNOG" id="COG0621">
    <property type="taxonomic scope" value="Bacteria"/>
</dbReference>
<dbReference type="HOGENOM" id="CLU_018697_2_0_9"/>
<dbReference type="Proteomes" id="UP000000606">
    <property type="component" value="Chromosome"/>
</dbReference>
<dbReference type="GO" id="GO:0005829">
    <property type="term" value="C:cytosol"/>
    <property type="evidence" value="ECO:0007669"/>
    <property type="project" value="TreeGrafter"/>
</dbReference>
<dbReference type="GO" id="GO:0051539">
    <property type="term" value="F:4 iron, 4 sulfur cluster binding"/>
    <property type="evidence" value="ECO:0007669"/>
    <property type="project" value="UniProtKB-UniRule"/>
</dbReference>
<dbReference type="GO" id="GO:0046872">
    <property type="term" value="F:metal ion binding"/>
    <property type="evidence" value="ECO:0007669"/>
    <property type="project" value="UniProtKB-KW"/>
</dbReference>
<dbReference type="GO" id="GO:0035597">
    <property type="term" value="F:N6-isopentenyladenosine methylthiotransferase activity"/>
    <property type="evidence" value="ECO:0007669"/>
    <property type="project" value="TreeGrafter"/>
</dbReference>
<dbReference type="CDD" id="cd01335">
    <property type="entry name" value="Radical_SAM"/>
    <property type="match status" value="1"/>
</dbReference>
<dbReference type="FunFam" id="3.40.50.12160:FF:000006">
    <property type="entry name" value="tRNA-2-methylthio-N(6)-dimethylallyladenosine synthase"/>
    <property type="match status" value="1"/>
</dbReference>
<dbReference type="FunFam" id="3.80.30.20:FF:000001">
    <property type="entry name" value="tRNA-2-methylthio-N(6)-dimethylallyladenosine synthase 2"/>
    <property type="match status" value="1"/>
</dbReference>
<dbReference type="Gene3D" id="3.40.50.12160">
    <property type="entry name" value="Methylthiotransferase, N-terminal domain"/>
    <property type="match status" value="1"/>
</dbReference>
<dbReference type="Gene3D" id="3.80.30.20">
    <property type="entry name" value="tm_1862 like domain"/>
    <property type="match status" value="1"/>
</dbReference>
<dbReference type="HAMAP" id="MF_01864">
    <property type="entry name" value="tRNA_metthiotr_MiaB"/>
    <property type="match status" value="1"/>
</dbReference>
<dbReference type="InterPro" id="IPR006638">
    <property type="entry name" value="Elp3/MiaA/NifB-like_rSAM"/>
</dbReference>
<dbReference type="InterPro" id="IPR005839">
    <property type="entry name" value="Methylthiotransferase"/>
</dbReference>
<dbReference type="InterPro" id="IPR020612">
    <property type="entry name" value="Methylthiotransferase_CS"/>
</dbReference>
<dbReference type="InterPro" id="IPR013848">
    <property type="entry name" value="Methylthiotransferase_N"/>
</dbReference>
<dbReference type="InterPro" id="IPR038135">
    <property type="entry name" value="Methylthiotransferase_N_sf"/>
</dbReference>
<dbReference type="InterPro" id="IPR006463">
    <property type="entry name" value="MiaB_methiolase"/>
</dbReference>
<dbReference type="InterPro" id="IPR007197">
    <property type="entry name" value="rSAM"/>
</dbReference>
<dbReference type="InterPro" id="IPR023404">
    <property type="entry name" value="rSAM_horseshoe"/>
</dbReference>
<dbReference type="InterPro" id="IPR002792">
    <property type="entry name" value="TRAM_dom"/>
</dbReference>
<dbReference type="NCBIfam" id="TIGR01574">
    <property type="entry name" value="miaB-methiolase"/>
    <property type="match status" value="1"/>
</dbReference>
<dbReference type="NCBIfam" id="TIGR00089">
    <property type="entry name" value="MiaB/RimO family radical SAM methylthiotransferase"/>
    <property type="match status" value="1"/>
</dbReference>
<dbReference type="PANTHER" id="PTHR43020">
    <property type="entry name" value="CDK5 REGULATORY SUBUNIT-ASSOCIATED PROTEIN 1"/>
    <property type="match status" value="1"/>
</dbReference>
<dbReference type="PANTHER" id="PTHR43020:SF2">
    <property type="entry name" value="MITOCHONDRIAL TRNA METHYLTHIOTRANSFERASE CDK5RAP1"/>
    <property type="match status" value="1"/>
</dbReference>
<dbReference type="Pfam" id="PF04055">
    <property type="entry name" value="Radical_SAM"/>
    <property type="match status" value="1"/>
</dbReference>
<dbReference type="Pfam" id="PF01938">
    <property type="entry name" value="TRAM"/>
    <property type="match status" value="1"/>
</dbReference>
<dbReference type="Pfam" id="PF00919">
    <property type="entry name" value="UPF0004"/>
    <property type="match status" value="1"/>
</dbReference>
<dbReference type="SFLD" id="SFLDF00273">
    <property type="entry name" value="(dimethylallyl)adenosine_tRNA"/>
    <property type="match status" value="1"/>
</dbReference>
<dbReference type="SFLD" id="SFLDG01082">
    <property type="entry name" value="B12-binding_domain_containing"/>
    <property type="match status" value="1"/>
</dbReference>
<dbReference type="SFLD" id="SFLDS00029">
    <property type="entry name" value="Radical_SAM"/>
    <property type="match status" value="1"/>
</dbReference>
<dbReference type="SMART" id="SM00729">
    <property type="entry name" value="Elp3"/>
    <property type="match status" value="1"/>
</dbReference>
<dbReference type="SUPFAM" id="SSF102114">
    <property type="entry name" value="Radical SAM enzymes"/>
    <property type="match status" value="1"/>
</dbReference>
<dbReference type="PROSITE" id="PS51449">
    <property type="entry name" value="MTTASE_N"/>
    <property type="match status" value="1"/>
</dbReference>
<dbReference type="PROSITE" id="PS01278">
    <property type="entry name" value="MTTASE_RADICAL"/>
    <property type="match status" value="1"/>
</dbReference>
<dbReference type="PROSITE" id="PS51918">
    <property type="entry name" value="RADICAL_SAM"/>
    <property type="match status" value="1"/>
</dbReference>
<dbReference type="PROSITE" id="PS50926">
    <property type="entry name" value="TRAM"/>
    <property type="match status" value="1"/>
</dbReference>
<evidence type="ECO:0000255" key="1">
    <source>
        <dbReference type="HAMAP-Rule" id="MF_01864"/>
    </source>
</evidence>
<evidence type="ECO:0000255" key="2">
    <source>
        <dbReference type="PROSITE-ProRule" id="PRU01266"/>
    </source>
</evidence>
<evidence type="ECO:0000256" key="3">
    <source>
        <dbReference type="SAM" id="MobiDB-lite"/>
    </source>
</evidence>
<gene>
    <name evidence="1" type="primary">miaB</name>
    <name type="ordered locus">BLi01925</name>
    <name type="ordered locus">BL03660</name>
</gene>
<feature type="chain" id="PRO_0000374135" description="tRNA-2-methylthio-N(6)-dimethylallyladenosine synthase">
    <location>
        <begin position="1"/>
        <end position="509"/>
    </location>
</feature>
<feature type="domain" description="MTTase N-terminal" evidence="1">
    <location>
        <begin position="66"/>
        <end position="184"/>
    </location>
</feature>
<feature type="domain" description="Radical SAM core" evidence="2">
    <location>
        <begin position="207"/>
        <end position="437"/>
    </location>
</feature>
<feature type="domain" description="TRAM" evidence="1">
    <location>
        <begin position="440"/>
        <end position="503"/>
    </location>
</feature>
<feature type="region of interest" description="Disordered" evidence="3">
    <location>
        <begin position="1"/>
        <end position="21"/>
    </location>
</feature>
<feature type="binding site" evidence="1">
    <location>
        <position position="75"/>
    </location>
    <ligand>
        <name>[4Fe-4S] cluster</name>
        <dbReference type="ChEBI" id="CHEBI:49883"/>
        <label>1</label>
    </ligand>
</feature>
<feature type="binding site" evidence="1">
    <location>
        <position position="111"/>
    </location>
    <ligand>
        <name>[4Fe-4S] cluster</name>
        <dbReference type="ChEBI" id="CHEBI:49883"/>
        <label>1</label>
    </ligand>
</feature>
<feature type="binding site" evidence="1">
    <location>
        <position position="145"/>
    </location>
    <ligand>
        <name>[4Fe-4S] cluster</name>
        <dbReference type="ChEBI" id="CHEBI:49883"/>
        <label>1</label>
    </ligand>
</feature>
<feature type="binding site" evidence="1">
    <location>
        <position position="221"/>
    </location>
    <ligand>
        <name>[4Fe-4S] cluster</name>
        <dbReference type="ChEBI" id="CHEBI:49883"/>
        <label>2</label>
        <note>4Fe-4S-S-AdoMet</note>
    </ligand>
</feature>
<feature type="binding site" evidence="1">
    <location>
        <position position="225"/>
    </location>
    <ligand>
        <name>[4Fe-4S] cluster</name>
        <dbReference type="ChEBI" id="CHEBI:49883"/>
        <label>2</label>
        <note>4Fe-4S-S-AdoMet</note>
    </ligand>
</feature>
<feature type="binding site" evidence="1">
    <location>
        <position position="228"/>
    </location>
    <ligand>
        <name>[4Fe-4S] cluster</name>
        <dbReference type="ChEBI" id="CHEBI:49883"/>
        <label>2</label>
        <note>4Fe-4S-S-AdoMet</note>
    </ligand>
</feature>
<protein>
    <recommendedName>
        <fullName evidence="1">tRNA-2-methylthio-N(6)-dimethylallyladenosine synthase</fullName>
        <ecNumber evidence="1">2.8.4.3</ecNumber>
    </recommendedName>
    <alternativeName>
        <fullName evidence="1">(Dimethylallyl)adenosine tRNA methylthiotransferase MiaB</fullName>
    </alternativeName>
    <alternativeName>
        <fullName evidence="1">tRNA-i(6)A37 methylthiotransferase</fullName>
    </alternativeName>
</protein>
<reference key="1">
    <citation type="journal article" date="2004" name="J. Mol. Microbiol. Biotechnol.">
        <title>The complete genome sequence of Bacillus licheniformis DSM13, an organism with great industrial potential.</title>
        <authorList>
            <person name="Veith B."/>
            <person name="Herzberg C."/>
            <person name="Steckel S."/>
            <person name="Feesche J."/>
            <person name="Maurer K.H."/>
            <person name="Ehrenreich P."/>
            <person name="Baeumer S."/>
            <person name="Henne A."/>
            <person name="Liesegang H."/>
            <person name="Merkl R."/>
            <person name="Ehrenreich A."/>
            <person name="Gottschalk G."/>
        </authorList>
    </citation>
    <scope>NUCLEOTIDE SEQUENCE [LARGE SCALE GENOMIC DNA]</scope>
    <source>
        <strain>ATCC 14580 / DSM 13 / JCM 2505 / CCUG 7422 / NBRC 12200 / NCIMB 9375 / NCTC 10341 / NRRL NRS-1264 / Gibson 46</strain>
    </source>
</reference>
<reference key="2">
    <citation type="journal article" date="2004" name="Genome Biol.">
        <title>Complete genome sequence of the industrial bacterium Bacillus licheniformis and comparisons with closely related Bacillus species.</title>
        <authorList>
            <person name="Rey M.W."/>
            <person name="Ramaiya P."/>
            <person name="Nelson B.A."/>
            <person name="Brody-Karpin S.D."/>
            <person name="Zaretsky E.J."/>
            <person name="Tang M."/>
            <person name="Lopez de Leon A."/>
            <person name="Xiang H."/>
            <person name="Gusti V."/>
            <person name="Clausen I.G."/>
            <person name="Olsen P.B."/>
            <person name="Rasmussen M.D."/>
            <person name="Andersen J.T."/>
            <person name="Joergensen P.L."/>
            <person name="Larsen T.S."/>
            <person name="Sorokin A."/>
            <person name="Bolotin A."/>
            <person name="Lapidus A."/>
            <person name="Galleron N."/>
            <person name="Ehrlich S.D."/>
            <person name="Berka R.M."/>
        </authorList>
    </citation>
    <scope>NUCLEOTIDE SEQUENCE [LARGE SCALE GENOMIC DNA]</scope>
    <source>
        <strain>ATCC 14580 / DSM 13 / JCM 2505 / CCUG 7422 / NBRC 12200 / NCIMB 9375 / NCTC 10341 / NRRL NRS-1264 / Gibson 46</strain>
    </source>
</reference>